<feature type="transit peptide" description="Mitochondrion" evidence="1">
    <location>
        <begin position="1"/>
        <end position="22"/>
    </location>
</feature>
<feature type="chain" id="PRO_0000002667" description="ATP synthase subunit delta, mitochondrial">
    <location>
        <begin position="23"/>
        <end position="158"/>
    </location>
</feature>
<comment type="function">
    <text>Mitochondrial membrane ATP synthase (F(1)F(0) ATP synthase or Complex V) produces ATP from ADP in the presence of a proton gradient across the membrane which is generated by electron transport complexes of the respiratory chain. F-type ATPases consist of two structural domains, F(1) - containing the extramembraneous catalytic core, and F(0) - containing the membrane proton channel, linked together by a central stalk and a peripheral stalk. During catalysis, ATP turnover in the catalytic domain of F(1) is coupled via a rotary mechanism of the central stalk subunits to proton translocation. Part of the complex F(1) domain and of the central stalk which is part of the complex rotary element. Rotation of the central stalk against the surrounding alpha(3)beta(3) subunits leads to hydrolysis of ATP in three separate catalytic sites on the beta subunits.</text>
</comment>
<comment type="subunit">
    <text>F-type ATPases have 2 components, CF(1) - the catalytic core - and CF(0) - the membrane proton channel. CF(1) has five subunits: alpha(3), beta(3), gamma(1), delta(1), epsilon(1). CF(0) has three main subunits: a, b and c.</text>
</comment>
<comment type="subcellular location">
    <subcellularLocation>
        <location>Mitochondrion</location>
    </subcellularLocation>
    <subcellularLocation>
        <location>Mitochondrion inner membrane</location>
    </subcellularLocation>
</comment>
<comment type="similarity">
    <text evidence="2">Belongs to the ATPase epsilon chain family.</text>
</comment>
<gene>
    <name type="primary">ATP16</name>
    <name type="ordered locus">AEL008W</name>
</gene>
<evidence type="ECO:0000250" key="1"/>
<evidence type="ECO:0000305" key="2"/>
<sequence>MFRLTSARALFRVANVAARRTYAEAAADALKLNFALPHETLFAGTAVKQVNLPVKTGQIGILANHVPIVEQLVPGVVEVLEGSESKKFFVSGGFATVQPDSTLSITSVEAFPLDSFSAENVRALLAEAQKNAGAADSRVAAEASIQIEVLEALQAALK</sequence>
<name>ATPD_EREGS</name>
<protein>
    <recommendedName>
        <fullName>ATP synthase subunit delta, mitochondrial</fullName>
    </recommendedName>
    <alternativeName>
        <fullName>F-ATPase delta subunit</fullName>
    </alternativeName>
</protein>
<keyword id="KW-0066">ATP synthesis</keyword>
<keyword id="KW-0139">CF(1)</keyword>
<keyword id="KW-0375">Hydrogen ion transport</keyword>
<keyword id="KW-0406">Ion transport</keyword>
<keyword id="KW-0472">Membrane</keyword>
<keyword id="KW-0496">Mitochondrion</keyword>
<keyword id="KW-0999">Mitochondrion inner membrane</keyword>
<keyword id="KW-1185">Reference proteome</keyword>
<keyword id="KW-0809">Transit peptide</keyword>
<keyword id="KW-0813">Transport</keyword>
<organism>
    <name type="scientific">Eremothecium gossypii (strain ATCC 10895 / CBS 109.51 / FGSC 9923 / NRRL Y-1056)</name>
    <name type="common">Yeast</name>
    <name type="synonym">Ashbya gossypii</name>
    <dbReference type="NCBI Taxonomy" id="284811"/>
    <lineage>
        <taxon>Eukaryota</taxon>
        <taxon>Fungi</taxon>
        <taxon>Dikarya</taxon>
        <taxon>Ascomycota</taxon>
        <taxon>Saccharomycotina</taxon>
        <taxon>Saccharomycetes</taxon>
        <taxon>Saccharomycetales</taxon>
        <taxon>Saccharomycetaceae</taxon>
        <taxon>Eremothecium</taxon>
    </lineage>
</organism>
<dbReference type="EMBL" id="AE016818">
    <property type="protein sequence ID" value="AAS52677.1"/>
    <property type="molecule type" value="Genomic_DNA"/>
</dbReference>
<dbReference type="RefSeq" id="NP_984853.1">
    <property type="nucleotide sequence ID" value="NM_210207.2"/>
</dbReference>
<dbReference type="SMR" id="Q757N0"/>
<dbReference type="FunCoup" id="Q757N0">
    <property type="interactions" value="761"/>
</dbReference>
<dbReference type="STRING" id="284811.Q757N0"/>
<dbReference type="EnsemblFungi" id="AAS52677">
    <property type="protein sequence ID" value="AAS52677"/>
    <property type="gene ID" value="AGOS_AEL008W"/>
</dbReference>
<dbReference type="GeneID" id="4621052"/>
<dbReference type="KEGG" id="ago:AGOS_AEL008W"/>
<dbReference type="eggNOG" id="KOG1758">
    <property type="taxonomic scope" value="Eukaryota"/>
</dbReference>
<dbReference type="HOGENOM" id="CLU_084338_0_0_1"/>
<dbReference type="InParanoid" id="Q757N0"/>
<dbReference type="OMA" id="HQTLYSE"/>
<dbReference type="OrthoDB" id="270171at2759"/>
<dbReference type="Proteomes" id="UP000000591">
    <property type="component" value="Chromosome V"/>
</dbReference>
<dbReference type="GO" id="GO:0005743">
    <property type="term" value="C:mitochondrial inner membrane"/>
    <property type="evidence" value="ECO:0007669"/>
    <property type="project" value="UniProtKB-SubCell"/>
</dbReference>
<dbReference type="GO" id="GO:0045259">
    <property type="term" value="C:proton-transporting ATP synthase complex"/>
    <property type="evidence" value="ECO:0007669"/>
    <property type="project" value="UniProtKB-KW"/>
</dbReference>
<dbReference type="GO" id="GO:0016887">
    <property type="term" value="F:ATP hydrolysis activity"/>
    <property type="evidence" value="ECO:0007669"/>
    <property type="project" value="EnsemblFungi"/>
</dbReference>
<dbReference type="GO" id="GO:0046933">
    <property type="term" value="F:proton-transporting ATP synthase activity, rotational mechanism"/>
    <property type="evidence" value="ECO:0007669"/>
    <property type="project" value="EnsemblFungi"/>
</dbReference>
<dbReference type="GO" id="GO:0015986">
    <property type="term" value="P:proton motive force-driven ATP synthesis"/>
    <property type="evidence" value="ECO:0000318"/>
    <property type="project" value="GO_Central"/>
</dbReference>
<dbReference type="CDD" id="cd12152">
    <property type="entry name" value="F1-ATPase_delta"/>
    <property type="match status" value="1"/>
</dbReference>
<dbReference type="FunFam" id="2.60.15.10:FF:000003">
    <property type="entry name" value="ATP synthase subunit delta, mitochondrial"/>
    <property type="match status" value="1"/>
</dbReference>
<dbReference type="Gene3D" id="6.10.140.880">
    <property type="match status" value="1"/>
</dbReference>
<dbReference type="Gene3D" id="2.60.15.10">
    <property type="entry name" value="F0F1 ATP synthase delta/epsilon subunit, N-terminal"/>
    <property type="match status" value="1"/>
</dbReference>
<dbReference type="HAMAP" id="MF_00530">
    <property type="entry name" value="ATP_synth_epsil_bac"/>
    <property type="match status" value="1"/>
</dbReference>
<dbReference type="InterPro" id="IPR001469">
    <property type="entry name" value="ATP_synth_F1_dsu/esu"/>
</dbReference>
<dbReference type="InterPro" id="IPR020546">
    <property type="entry name" value="ATP_synth_F1_dsu/esu_N"/>
</dbReference>
<dbReference type="InterPro" id="IPR048938">
    <property type="entry name" value="ATPD_C_fung"/>
</dbReference>
<dbReference type="InterPro" id="IPR036771">
    <property type="entry name" value="ATPsynth_dsu/esu_N"/>
</dbReference>
<dbReference type="PANTHER" id="PTHR13822">
    <property type="entry name" value="ATP SYNTHASE DELTA/EPSILON CHAIN"/>
    <property type="match status" value="1"/>
</dbReference>
<dbReference type="PANTHER" id="PTHR13822:SF7">
    <property type="entry name" value="ATP SYNTHASE SUBUNIT DELTA, MITOCHONDRIAL"/>
    <property type="match status" value="1"/>
</dbReference>
<dbReference type="Pfam" id="PF02823">
    <property type="entry name" value="ATP-synt_DE_N"/>
    <property type="match status" value="1"/>
</dbReference>
<dbReference type="Pfam" id="PF21334">
    <property type="entry name" value="ATPD_C_fung"/>
    <property type="match status" value="1"/>
</dbReference>
<dbReference type="SUPFAM" id="SSF51344">
    <property type="entry name" value="Epsilon subunit of F1F0-ATP synthase N-terminal domain"/>
    <property type="match status" value="1"/>
</dbReference>
<accession>Q757N0</accession>
<proteinExistence type="inferred from homology"/>
<reference key="1">
    <citation type="journal article" date="2004" name="Science">
        <title>The Ashbya gossypii genome as a tool for mapping the ancient Saccharomyces cerevisiae genome.</title>
        <authorList>
            <person name="Dietrich F.S."/>
            <person name="Voegeli S."/>
            <person name="Brachat S."/>
            <person name="Lerch A."/>
            <person name="Gates K."/>
            <person name="Steiner S."/>
            <person name="Mohr C."/>
            <person name="Poehlmann R."/>
            <person name="Luedi P."/>
            <person name="Choi S."/>
            <person name="Wing R.A."/>
            <person name="Flavier A."/>
            <person name="Gaffney T.D."/>
            <person name="Philippsen P."/>
        </authorList>
    </citation>
    <scope>NUCLEOTIDE SEQUENCE [LARGE SCALE GENOMIC DNA]</scope>
    <source>
        <strain>ATCC 10895 / CBS 109.51 / FGSC 9923 / NRRL Y-1056</strain>
    </source>
</reference>
<reference key="2">
    <citation type="journal article" date="2013" name="G3 (Bethesda)">
        <title>Genomes of Ashbya fungi isolated from insects reveal four mating-type loci, numerous translocations, lack of transposons, and distinct gene duplications.</title>
        <authorList>
            <person name="Dietrich F.S."/>
            <person name="Voegeli S."/>
            <person name="Kuo S."/>
            <person name="Philippsen P."/>
        </authorList>
    </citation>
    <scope>GENOME REANNOTATION</scope>
    <source>
        <strain>ATCC 10895 / CBS 109.51 / FGSC 9923 / NRRL Y-1056</strain>
    </source>
</reference>